<gene>
    <name evidence="1" type="primary">hldD</name>
    <name type="ordered locus">SG3721</name>
</gene>
<protein>
    <recommendedName>
        <fullName evidence="1">ADP-L-glycero-D-manno-heptose-6-epimerase</fullName>
        <ecNumber evidence="1">5.1.3.20</ecNumber>
    </recommendedName>
    <alternativeName>
        <fullName evidence="1">ADP-L-glycero-beta-D-manno-heptose-6-epimerase</fullName>
        <shortName evidence="1">ADP-glyceromanno-heptose 6-epimerase</shortName>
        <shortName evidence="1">ADP-hep 6-epimerase</shortName>
        <shortName evidence="1">AGME</shortName>
    </alternativeName>
</protein>
<proteinExistence type="inferred from homology"/>
<reference key="1">
    <citation type="journal article" date="2008" name="Genome Res.">
        <title>Comparative genome analysis of Salmonella enteritidis PT4 and Salmonella gallinarum 287/91 provides insights into evolutionary and host adaptation pathways.</title>
        <authorList>
            <person name="Thomson N.R."/>
            <person name="Clayton D.J."/>
            <person name="Windhorst D."/>
            <person name="Vernikos G."/>
            <person name="Davidson S."/>
            <person name="Churcher C."/>
            <person name="Quail M.A."/>
            <person name="Stevens M."/>
            <person name="Jones M.A."/>
            <person name="Watson M."/>
            <person name="Barron A."/>
            <person name="Layton A."/>
            <person name="Pickard D."/>
            <person name="Kingsley R.A."/>
            <person name="Bignell A."/>
            <person name="Clark L."/>
            <person name="Harris B."/>
            <person name="Ormond D."/>
            <person name="Abdellah Z."/>
            <person name="Brooks K."/>
            <person name="Cherevach I."/>
            <person name="Chillingworth T."/>
            <person name="Woodward J."/>
            <person name="Norberczak H."/>
            <person name="Lord A."/>
            <person name="Arrowsmith C."/>
            <person name="Jagels K."/>
            <person name="Moule S."/>
            <person name="Mungall K."/>
            <person name="Saunders M."/>
            <person name="Whitehead S."/>
            <person name="Chabalgoity J.A."/>
            <person name="Maskell D."/>
            <person name="Humphreys T."/>
            <person name="Roberts M."/>
            <person name="Barrow P.A."/>
            <person name="Dougan G."/>
            <person name="Parkhill J."/>
        </authorList>
    </citation>
    <scope>NUCLEOTIDE SEQUENCE [LARGE SCALE GENOMIC DNA]</scope>
    <source>
        <strain>287/91 / NCTC 13346</strain>
    </source>
</reference>
<keyword id="KW-0119">Carbohydrate metabolism</keyword>
<keyword id="KW-0413">Isomerase</keyword>
<keyword id="KW-0521">NADP</keyword>
<sequence length="310" mass="34879">MIIVTGGAGFIGSNIVKALNDKGITDILVVDNLKDGTKFVNLVDLNIADYMDKEDFLIQIMSGEELGDIEAIFHEGACSSTTEWDGKYMMDNNYQYSKELLHYCLEREIPFLYASSAATYGGRTSDFIESREYEKPLNVYGYSKFLFDEYVRQILPEANSQIVGFRYFNVYGPREGHKGSMASVAFHLNTQLNNGESPKLFEGSENFKRDFVYVGDVAAVNLWFLESGKSGIFNLGTGRAESFQAVADATLAYHKKSSIEYIPFPDKLKGRYQAFTQADLTNLRNAGYDKPFKTVAEGVTEYMAWLNRDA</sequence>
<comment type="function">
    <text evidence="1">Catalyzes the interconversion between ADP-D-glycero-beta-D-manno-heptose and ADP-L-glycero-beta-D-manno-heptose via an epimerization at carbon 6 of the heptose.</text>
</comment>
<comment type="catalytic activity">
    <reaction evidence="1">
        <text>ADP-D-glycero-beta-D-manno-heptose = ADP-L-glycero-beta-D-manno-heptose</text>
        <dbReference type="Rhea" id="RHEA:17577"/>
        <dbReference type="ChEBI" id="CHEBI:59967"/>
        <dbReference type="ChEBI" id="CHEBI:61506"/>
        <dbReference type="EC" id="5.1.3.20"/>
    </reaction>
</comment>
<comment type="cofactor">
    <cofactor evidence="1">
        <name>NADP(+)</name>
        <dbReference type="ChEBI" id="CHEBI:58349"/>
    </cofactor>
    <text evidence="1">Binds 1 NADP(+) per subunit.</text>
</comment>
<comment type="pathway">
    <text evidence="1">Nucleotide-sugar biosynthesis; ADP-L-glycero-beta-D-manno-heptose biosynthesis; ADP-L-glycero-beta-D-manno-heptose from D-glycero-beta-D-manno-heptose 7-phosphate: step 4/4.</text>
</comment>
<comment type="subunit">
    <text evidence="1">Homopentamer.</text>
</comment>
<comment type="domain">
    <text evidence="1">Contains a large N-terminal NADP-binding domain, and a smaller C-terminal substrate-binding domain.</text>
</comment>
<comment type="similarity">
    <text evidence="1">Belongs to the NAD(P)-dependent epimerase/dehydratase family. HldD subfamily.</text>
</comment>
<name>HLDD_SALG2</name>
<organism>
    <name type="scientific">Salmonella gallinarum (strain 287/91 / NCTC 13346)</name>
    <dbReference type="NCBI Taxonomy" id="550538"/>
    <lineage>
        <taxon>Bacteria</taxon>
        <taxon>Pseudomonadati</taxon>
        <taxon>Pseudomonadota</taxon>
        <taxon>Gammaproteobacteria</taxon>
        <taxon>Enterobacterales</taxon>
        <taxon>Enterobacteriaceae</taxon>
        <taxon>Salmonella</taxon>
    </lineage>
</organism>
<dbReference type="EC" id="5.1.3.20" evidence="1"/>
<dbReference type="EMBL" id="AM933173">
    <property type="protein sequence ID" value="CAR39501.1"/>
    <property type="molecule type" value="Genomic_DNA"/>
</dbReference>
<dbReference type="SMR" id="B5RGG8"/>
<dbReference type="KEGG" id="seg:SG3721"/>
<dbReference type="HOGENOM" id="CLU_007383_1_3_6"/>
<dbReference type="UniPathway" id="UPA00356">
    <property type="reaction ID" value="UER00440"/>
</dbReference>
<dbReference type="Proteomes" id="UP000008321">
    <property type="component" value="Chromosome"/>
</dbReference>
<dbReference type="GO" id="GO:0008712">
    <property type="term" value="F:ADP-glyceromanno-heptose 6-epimerase activity"/>
    <property type="evidence" value="ECO:0007669"/>
    <property type="project" value="UniProtKB-UniRule"/>
</dbReference>
<dbReference type="GO" id="GO:0050661">
    <property type="term" value="F:NADP binding"/>
    <property type="evidence" value="ECO:0007669"/>
    <property type="project" value="InterPro"/>
</dbReference>
<dbReference type="GO" id="GO:0097171">
    <property type="term" value="P:ADP-L-glycero-beta-D-manno-heptose biosynthetic process"/>
    <property type="evidence" value="ECO:0007669"/>
    <property type="project" value="UniProtKB-UniPathway"/>
</dbReference>
<dbReference type="GO" id="GO:0005975">
    <property type="term" value="P:carbohydrate metabolic process"/>
    <property type="evidence" value="ECO:0007669"/>
    <property type="project" value="UniProtKB-UniRule"/>
</dbReference>
<dbReference type="CDD" id="cd05248">
    <property type="entry name" value="ADP_GME_SDR_e"/>
    <property type="match status" value="1"/>
</dbReference>
<dbReference type="Gene3D" id="3.40.50.720">
    <property type="entry name" value="NAD(P)-binding Rossmann-like Domain"/>
    <property type="match status" value="1"/>
</dbReference>
<dbReference type="Gene3D" id="3.90.25.10">
    <property type="entry name" value="UDP-galactose 4-epimerase, domain 1"/>
    <property type="match status" value="1"/>
</dbReference>
<dbReference type="HAMAP" id="MF_01601">
    <property type="entry name" value="Heptose_epimerase"/>
    <property type="match status" value="1"/>
</dbReference>
<dbReference type="InterPro" id="IPR001509">
    <property type="entry name" value="Epimerase_deHydtase"/>
</dbReference>
<dbReference type="InterPro" id="IPR011912">
    <property type="entry name" value="Heptose_epim"/>
</dbReference>
<dbReference type="InterPro" id="IPR036291">
    <property type="entry name" value="NAD(P)-bd_dom_sf"/>
</dbReference>
<dbReference type="NCBIfam" id="TIGR02197">
    <property type="entry name" value="heptose_epim"/>
    <property type="match status" value="1"/>
</dbReference>
<dbReference type="NCBIfam" id="NF008360">
    <property type="entry name" value="PRK11150.1"/>
    <property type="match status" value="1"/>
</dbReference>
<dbReference type="PANTHER" id="PTHR43103:SF3">
    <property type="entry name" value="ADP-L-GLYCERO-D-MANNO-HEPTOSE-6-EPIMERASE"/>
    <property type="match status" value="1"/>
</dbReference>
<dbReference type="PANTHER" id="PTHR43103">
    <property type="entry name" value="NUCLEOSIDE-DIPHOSPHATE-SUGAR EPIMERASE"/>
    <property type="match status" value="1"/>
</dbReference>
<dbReference type="Pfam" id="PF01370">
    <property type="entry name" value="Epimerase"/>
    <property type="match status" value="1"/>
</dbReference>
<dbReference type="SUPFAM" id="SSF51735">
    <property type="entry name" value="NAD(P)-binding Rossmann-fold domains"/>
    <property type="match status" value="1"/>
</dbReference>
<accession>B5RGG8</accession>
<feature type="chain" id="PRO_1000148090" description="ADP-L-glycero-D-manno-heptose-6-epimerase">
    <location>
        <begin position="1"/>
        <end position="310"/>
    </location>
</feature>
<feature type="active site" description="Proton acceptor" evidence="1">
    <location>
        <position position="140"/>
    </location>
</feature>
<feature type="active site" description="Proton acceptor" evidence="1">
    <location>
        <position position="178"/>
    </location>
</feature>
<feature type="binding site" evidence="1">
    <location>
        <begin position="10"/>
        <end position="11"/>
    </location>
    <ligand>
        <name>NADP(+)</name>
        <dbReference type="ChEBI" id="CHEBI:58349"/>
    </ligand>
</feature>
<feature type="binding site" evidence="1">
    <location>
        <begin position="31"/>
        <end position="32"/>
    </location>
    <ligand>
        <name>NADP(+)</name>
        <dbReference type="ChEBI" id="CHEBI:58349"/>
    </ligand>
</feature>
<feature type="binding site" evidence="1">
    <location>
        <position position="38"/>
    </location>
    <ligand>
        <name>NADP(+)</name>
        <dbReference type="ChEBI" id="CHEBI:58349"/>
    </ligand>
</feature>
<feature type="binding site" evidence="1">
    <location>
        <position position="53"/>
    </location>
    <ligand>
        <name>NADP(+)</name>
        <dbReference type="ChEBI" id="CHEBI:58349"/>
    </ligand>
</feature>
<feature type="binding site" evidence="1">
    <location>
        <begin position="75"/>
        <end position="79"/>
    </location>
    <ligand>
        <name>NADP(+)</name>
        <dbReference type="ChEBI" id="CHEBI:58349"/>
    </ligand>
</feature>
<feature type="binding site" evidence="1">
    <location>
        <position position="92"/>
    </location>
    <ligand>
        <name>NADP(+)</name>
        <dbReference type="ChEBI" id="CHEBI:58349"/>
    </ligand>
</feature>
<feature type="binding site" evidence="1">
    <location>
        <position position="144"/>
    </location>
    <ligand>
        <name>NADP(+)</name>
        <dbReference type="ChEBI" id="CHEBI:58349"/>
    </ligand>
</feature>
<feature type="binding site" evidence="1">
    <location>
        <position position="169"/>
    </location>
    <ligand>
        <name>substrate</name>
    </ligand>
</feature>
<feature type="binding site" evidence="1">
    <location>
        <position position="170"/>
    </location>
    <ligand>
        <name>NADP(+)</name>
        <dbReference type="ChEBI" id="CHEBI:58349"/>
    </ligand>
</feature>
<feature type="binding site" evidence="1">
    <location>
        <position position="178"/>
    </location>
    <ligand>
        <name>NADP(+)</name>
        <dbReference type="ChEBI" id="CHEBI:58349"/>
    </ligand>
</feature>
<feature type="binding site" evidence="1">
    <location>
        <position position="180"/>
    </location>
    <ligand>
        <name>substrate</name>
    </ligand>
</feature>
<feature type="binding site" evidence="1">
    <location>
        <position position="187"/>
    </location>
    <ligand>
        <name>substrate</name>
    </ligand>
</feature>
<feature type="binding site" evidence="1">
    <location>
        <begin position="201"/>
        <end position="204"/>
    </location>
    <ligand>
        <name>substrate</name>
    </ligand>
</feature>
<feature type="binding site" evidence="1">
    <location>
        <position position="209"/>
    </location>
    <ligand>
        <name>substrate</name>
    </ligand>
</feature>
<feature type="binding site" evidence="1">
    <location>
        <position position="272"/>
    </location>
    <ligand>
        <name>substrate</name>
    </ligand>
</feature>
<evidence type="ECO:0000255" key="1">
    <source>
        <dbReference type="HAMAP-Rule" id="MF_01601"/>
    </source>
</evidence>